<comment type="function">
    <text evidence="1">One of the components of the core complex of photosystem II (PSII). PSII is a light-driven water:plastoquinone oxidoreductase that uses light energy to abstract electrons from H(2)O, generating O(2) and a proton gradient subsequently used for ATP formation. It consists of a core antenna complex that captures photons, and an electron transfer chain that converts photonic excitation into a charge separation.</text>
</comment>
<comment type="subunit">
    <text evidence="1">PSII is composed of 1 copy each of membrane proteins PsbA, PsbB, PsbC, PsbD, PsbE, PsbF, PsbH, PsbI, PsbJ, PsbK, PsbL, PsbM, PsbT, PsbX, PsbY, PsbZ, Psb30/Ycf12, at least 3 peripheral proteins of the oxygen-evolving complex and a large number of cofactors. It forms dimeric complexes.</text>
</comment>
<comment type="subcellular location">
    <subcellularLocation>
        <location evidence="1">Plastid</location>
        <location evidence="1">Chloroplast thylakoid membrane</location>
        <topology evidence="1">Single-pass membrane protein</topology>
    </subcellularLocation>
</comment>
<comment type="similarity">
    <text evidence="1">Belongs to the PsbJ family.</text>
</comment>
<reference key="1">
    <citation type="submission" date="2007-03" db="EMBL/GenBank/DDBJ databases">
        <title>Sequencing analysis of Crucihimalaya wallichii chloroplast DNA.</title>
        <authorList>
            <person name="Hosouchi T."/>
            <person name="Tsuruoka H."/>
            <person name="Kotani H."/>
        </authorList>
    </citation>
    <scope>NUCLEOTIDE SEQUENCE [LARGE SCALE GENOMIC DNA]</scope>
</reference>
<feature type="chain" id="PRO_0000292251" description="Photosystem II reaction center protein J">
    <location>
        <begin position="1"/>
        <end position="40"/>
    </location>
</feature>
<feature type="transmembrane region" description="Helical" evidence="1">
    <location>
        <begin position="8"/>
        <end position="28"/>
    </location>
</feature>
<sequence length="40" mass="4101">MADTTGRIPLWVIGTVAGIPVIGLIGIFFYGSYSGLGSSL</sequence>
<geneLocation type="chloroplast"/>
<dbReference type="EMBL" id="AP009372">
    <property type="protein sequence ID" value="BAF50300.1"/>
    <property type="molecule type" value="Genomic_DNA"/>
</dbReference>
<dbReference type="RefSeq" id="YP_001123476.1">
    <property type="nucleotide sequence ID" value="NC_009271.1"/>
</dbReference>
<dbReference type="SMR" id="A4QKU5"/>
<dbReference type="GeneID" id="4962669"/>
<dbReference type="GO" id="GO:0009535">
    <property type="term" value="C:chloroplast thylakoid membrane"/>
    <property type="evidence" value="ECO:0007669"/>
    <property type="project" value="UniProtKB-SubCell"/>
</dbReference>
<dbReference type="GO" id="GO:0009539">
    <property type="term" value="C:photosystem II reaction center"/>
    <property type="evidence" value="ECO:0007669"/>
    <property type="project" value="InterPro"/>
</dbReference>
<dbReference type="GO" id="GO:0015979">
    <property type="term" value="P:photosynthesis"/>
    <property type="evidence" value="ECO:0007669"/>
    <property type="project" value="UniProtKB-UniRule"/>
</dbReference>
<dbReference type="Gene3D" id="6.10.250.2070">
    <property type="match status" value="1"/>
</dbReference>
<dbReference type="HAMAP" id="MF_01305">
    <property type="entry name" value="PSII_PsbJ"/>
    <property type="match status" value="1"/>
</dbReference>
<dbReference type="InterPro" id="IPR002682">
    <property type="entry name" value="PSII_PsbJ"/>
</dbReference>
<dbReference type="InterPro" id="IPR037267">
    <property type="entry name" value="PSII_PsbJ_sf"/>
</dbReference>
<dbReference type="NCBIfam" id="NF002722">
    <property type="entry name" value="PRK02565.1"/>
    <property type="match status" value="1"/>
</dbReference>
<dbReference type="PANTHER" id="PTHR34812">
    <property type="entry name" value="PHOTOSYSTEM II REACTION CENTER PROTEIN J"/>
    <property type="match status" value="1"/>
</dbReference>
<dbReference type="PANTHER" id="PTHR34812:SF3">
    <property type="entry name" value="PHOTOSYSTEM II REACTION CENTER PROTEIN J"/>
    <property type="match status" value="1"/>
</dbReference>
<dbReference type="Pfam" id="PF01788">
    <property type="entry name" value="PsbJ"/>
    <property type="match status" value="1"/>
</dbReference>
<dbReference type="SUPFAM" id="SSF161021">
    <property type="entry name" value="Photosystem II reaction center protein J, PsbJ"/>
    <property type="match status" value="1"/>
</dbReference>
<gene>
    <name evidence="1" type="primary">psbJ</name>
</gene>
<evidence type="ECO:0000255" key="1">
    <source>
        <dbReference type="HAMAP-Rule" id="MF_01305"/>
    </source>
</evidence>
<proteinExistence type="inferred from homology"/>
<accession>A4QKU5</accession>
<protein>
    <recommendedName>
        <fullName evidence="1">Photosystem II reaction center protein J</fullName>
        <shortName evidence="1">PSII-J</shortName>
    </recommendedName>
</protein>
<keyword id="KW-0150">Chloroplast</keyword>
<keyword id="KW-0472">Membrane</keyword>
<keyword id="KW-0602">Photosynthesis</keyword>
<keyword id="KW-0604">Photosystem II</keyword>
<keyword id="KW-0934">Plastid</keyword>
<keyword id="KW-0674">Reaction center</keyword>
<keyword id="KW-0793">Thylakoid</keyword>
<keyword id="KW-0812">Transmembrane</keyword>
<keyword id="KW-1133">Transmembrane helix</keyword>
<organism>
    <name type="scientific">Crucihimalaya wallichii</name>
    <name type="common">Rock-cress</name>
    <name type="synonym">Arabidopsis campestris</name>
    <dbReference type="NCBI Taxonomy" id="78192"/>
    <lineage>
        <taxon>Eukaryota</taxon>
        <taxon>Viridiplantae</taxon>
        <taxon>Streptophyta</taxon>
        <taxon>Embryophyta</taxon>
        <taxon>Tracheophyta</taxon>
        <taxon>Spermatophyta</taxon>
        <taxon>Magnoliopsida</taxon>
        <taxon>eudicotyledons</taxon>
        <taxon>Gunneridae</taxon>
        <taxon>Pentapetalae</taxon>
        <taxon>rosids</taxon>
        <taxon>malvids</taxon>
        <taxon>Brassicales</taxon>
        <taxon>Brassicaceae</taxon>
        <taxon>Crucihimalayeae</taxon>
        <taxon>Crucihimalaya</taxon>
    </lineage>
</organism>
<name>PSBJ_CRUWA</name>